<proteinExistence type="inferred from homology"/>
<gene>
    <name evidence="1" type="primary">lgt</name>
    <name type="ordered locus">PBPRA0580</name>
</gene>
<dbReference type="EC" id="2.5.1.145" evidence="1"/>
<dbReference type="EMBL" id="CR378664">
    <property type="protein sequence ID" value="CAG19003.1"/>
    <property type="molecule type" value="Genomic_DNA"/>
</dbReference>
<dbReference type="RefSeq" id="WP_011217354.1">
    <property type="nucleotide sequence ID" value="NC_006370.1"/>
</dbReference>
<dbReference type="SMR" id="Q6LUM2"/>
<dbReference type="STRING" id="298386.PBPRA0580"/>
<dbReference type="KEGG" id="ppr:PBPRA0580"/>
<dbReference type="eggNOG" id="COG0682">
    <property type="taxonomic scope" value="Bacteria"/>
</dbReference>
<dbReference type="HOGENOM" id="CLU_013386_1_0_6"/>
<dbReference type="UniPathway" id="UPA00664"/>
<dbReference type="Proteomes" id="UP000000593">
    <property type="component" value="Chromosome 1"/>
</dbReference>
<dbReference type="GO" id="GO:0005886">
    <property type="term" value="C:plasma membrane"/>
    <property type="evidence" value="ECO:0007669"/>
    <property type="project" value="UniProtKB-SubCell"/>
</dbReference>
<dbReference type="GO" id="GO:0008961">
    <property type="term" value="F:phosphatidylglycerol-prolipoprotein diacylglyceryl transferase activity"/>
    <property type="evidence" value="ECO:0007669"/>
    <property type="project" value="UniProtKB-UniRule"/>
</dbReference>
<dbReference type="GO" id="GO:0042158">
    <property type="term" value="P:lipoprotein biosynthetic process"/>
    <property type="evidence" value="ECO:0007669"/>
    <property type="project" value="UniProtKB-UniRule"/>
</dbReference>
<dbReference type="HAMAP" id="MF_01147">
    <property type="entry name" value="Lgt"/>
    <property type="match status" value="1"/>
</dbReference>
<dbReference type="InterPro" id="IPR001640">
    <property type="entry name" value="Lgt"/>
</dbReference>
<dbReference type="NCBIfam" id="TIGR00544">
    <property type="entry name" value="lgt"/>
    <property type="match status" value="1"/>
</dbReference>
<dbReference type="PANTHER" id="PTHR30589:SF0">
    <property type="entry name" value="PHOSPHATIDYLGLYCEROL--PROLIPOPROTEIN DIACYLGLYCERYL TRANSFERASE"/>
    <property type="match status" value="1"/>
</dbReference>
<dbReference type="PANTHER" id="PTHR30589">
    <property type="entry name" value="PROLIPOPROTEIN DIACYLGLYCERYL TRANSFERASE"/>
    <property type="match status" value="1"/>
</dbReference>
<dbReference type="Pfam" id="PF01790">
    <property type="entry name" value="LGT"/>
    <property type="match status" value="1"/>
</dbReference>
<dbReference type="PROSITE" id="PS01311">
    <property type="entry name" value="LGT"/>
    <property type="match status" value="1"/>
</dbReference>
<comment type="function">
    <text evidence="1">Catalyzes the transfer of the diacylglyceryl group from phosphatidylglycerol to the sulfhydryl group of the N-terminal cysteine of a prolipoprotein, the first step in the formation of mature lipoproteins.</text>
</comment>
<comment type="catalytic activity">
    <reaction evidence="1">
        <text>L-cysteinyl-[prolipoprotein] + a 1,2-diacyl-sn-glycero-3-phospho-(1'-sn-glycerol) = an S-1,2-diacyl-sn-glyceryl-L-cysteinyl-[prolipoprotein] + sn-glycerol 1-phosphate + H(+)</text>
        <dbReference type="Rhea" id="RHEA:56712"/>
        <dbReference type="Rhea" id="RHEA-COMP:14679"/>
        <dbReference type="Rhea" id="RHEA-COMP:14680"/>
        <dbReference type="ChEBI" id="CHEBI:15378"/>
        <dbReference type="ChEBI" id="CHEBI:29950"/>
        <dbReference type="ChEBI" id="CHEBI:57685"/>
        <dbReference type="ChEBI" id="CHEBI:64716"/>
        <dbReference type="ChEBI" id="CHEBI:140658"/>
        <dbReference type="EC" id="2.5.1.145"/>
    </reaction>
</comment>
<comment type="pathway">
    <text evidence="1">Protein modification; lipoprotein biosynthesis (diacylglyceryl transfer).</text>
</comment>
<comment type="subcellular location">
    <subcellularLocation>
        <location evidence="1">Cell inner membrane</location>
        <topology evidence="1">Multi-pass membrane protein</topology>
    </subcellularLocation>
</comment>
<comment type="similarity">
    <text evidence="1">Belongs to the Lgt family.</text>
</comment>
<feature type="chain" id="PRO_0000172648" description="Phosphatidylglycerol--prolipoprotein diacylglyceryl transferase">
    <location>
        <begin position="1"/>
        <end position="266"/>
    </location>
</feature>
<feature type="transmembrane region" description="Helical" evidence="1">
    <location>
        <begin position="21"/>
        <end position="41"/>
    </location>
</feature>
<feature type="transmembrane region" description="Helical" evidence="1">
    <location>
        <begin position="60"/>
        <end position="80"/>
    </location>
</feature>
<feature type="transmembrane region" description="Helical" evidence="1">
    <location>
        <begin position="95"/>
        <end position="115"/>
    </location>
</feature>
<feature type="transmembrane region" description="Helical" evidence="1">
    <location>
        <begin position="124"/>
        <end position="144"/>
    </location>
</feature>
<feature type="transmembrane region" description="Helical" evidence="1">
    <location>
        <begin position="176"/>
        <end position="196"/>
    </location>
</feature>
<feature type="transmembrane region" description="Helical" evidence="1">
    <location>
        <begin position="203"/>
        <end position="223"/>
    </location>
</feature>
<feature type="transmembrane region" description="Helical" evidence="1">
    <location>
        <begin position="236"/>
        <end position="256"/>
    </location>
</feature>
<feature type="binding site" evidence="1">
    <location>
        <position position="143"/>
    </location>
    <ligand>
        <name>a 1,2-diacyl-sn-glycero-3-phospho-(1'-sn-glycerol)</name>
        <dbReference type="ChEBI" id="CHEBI:64716"/>
    </ligand>
</feature>
<protein>
    <recommendedName>
        <fullName evidence="1">Phosphatidylglycerol--prolipoprotein diacylglyceryl transferase</fullName>
        <ecNumber evidence="1">2.5.1.145</ecNumber>
    </recommendedName>
</protein>
<sequence>MSQGFLTFPTIDPVLIQLGPLAIRWYGLMYLVGFLFAMWLANRRADKPNSGWTRDQVSDLLFAGFLGVVLGGRIGYVLFYNFGLFLDNPLYLFQVWTGGMSFHGGLLGVMTAMLWYGHRNKRTFFSVADFIAPLVPFGLGMGRMGNFMNGELWGRVTDMPWAMVFPTGGPFPRHPSQLYEAFLEGFVLLIILNIFIRKPRPAGAVSGLFLIGYGSFRFIIEYFREPDAQLGLFGDWISMGQILSSPMIIFGALLMLWAYKAQPKTA</sequence>
<accession>Q6LUM2</accession>
<reference key="1">
    <citation type="journal article" date="2005" name="Science">
        <title>Life at depth: Photobacterium profundum genome sequence and expression analysis.</title>
        <authorList>
            <person name="Vezzi A."/>
            <person name="Campanaro S."/>
            <person name="D'Angelo M."/>
            <person name="Simonato F."/>
            <person name="Vitulo N."/>
            <person name="Lauro F.M."/>
            <person name="Cestaro A."/>
            <person name="Malacrida G."/>
            <person name="Simionati B."/>
            <person name="Cannata N."/>
            <person name="Romualdi C."/>
            <person name="Bartlett D.H."/>
            <person name="Valle G."/>
        </authorList>
    </citation>
    <scope>NUCLEOTIDE SEQUENCE [LARGE SCALE GENOMIC DNA]</scope>
    <source>
        <strain>ATCC BAA-1253 / SS9</strain>
    </source>
</reference>
<keyword id="KW-0997">Cell inner membrane</keyword>
<keyword id="KW-1003">Cell membrane</keyword>
<keyword id="KW-0472">Membrane</keyword>
<keyword id="KW-1185">Reference proteome</keyword>
<keyword id="KW-0808">Transferase</keyword>
<keyword id="KW-0812">Transmembrane</keyword>
<keyword id="KW-1133">Transmembrane helix</keyword>
<organism>
    <name type="scientific">Photobacterium profundum (strain SS9)</name>
    <dbReference type="NCBI Taxonomy" id="298386"/>
    <lineage>
        <taxon>Bacteria</taxon>
        <taxon>Pseudomonadati</taxon>
        <taxon>Pseudomonadota</taxon>
        <taxon>Gammaproteobacteria</taxon>
        <taxon>Vibrionales</taxon>
        <taxon>Vibrionaceae</taxon>
        <taxon>Photobacterium</taxon>
    </lineage>
</organism>
<evidence type="ECO:0000255" key="1">
    <source>
        <dbReference type="HAMAP-Rule" id="MF_01147"/>
    </source>
</evidence>
<name>LGT_PHOPR</name>